<dbReference type="EC" id="2.7.1.148" evidence="1"/>
<dbReference type="EMBL" id="AJ965256">
    <property type="protein sequence ID" value="CAI82570.1"/>
    <property type="molecule type" value="Genomic_DNA"/>
</dbReference>
<dbReference type="RefSeq" id="WP_011308927.1">
    <property type="nucleotide sequence ID" value="NC_007356.1"/>
</dbReference>
<dbReference type="SMR" id="Q3ZZE5"/>
<dbReference type="KEGG" id="deh:cbdbA356"/>
<dbReference type="HOGENOM" id="CLU_053057_1_1_0"/>
<dbReference type="UniPathway" id="UPA00056">
    <property type="reaction ID" value="UER00094"/>
</dbReference>
<dbReference type="Proteomes" id="UP000000433">
    <property type="component" value="Chromosome"/>
</dbReference>
<dbReference type="GO" id="GO:0050515">
    <property type="term" value="F:4-(cytidine 5'-diphospho)-2-C-methyl-D-erythritol kinase activity"/>
    <property type="evidence" value="ECO:0007669"/>
    <property type="project" value="UniProtKB-UniRule"/>
</dbReference>
<dbReference type="GO" id="GO:0005524">
    <property type="term" value="F:ATP binding"/>
    <property type="evidence" value="ECO:0007669"/>
    <property type="project" value="UniProtKB-UniRule"/>
</dbReference>
<dbReference type="GO" id="GO:0019288">
    <property type="term" value="P:isopentenyl diphosphate biosynthetic process, methylerythritol 4-phosphate pathway"/>
    <property type="evidence" value="ECO:0007669"/>
    <property type="project" value="UniProtKB-UniRule"/>
</dbReference>
<dbReference type="GO" id="GO:0016114">
    <property type="term" value="P:terpenoid biosynthetic process"/>
    <property type="evidence" value="ECO:0007669"/>
    <property type="project" value="InterPro"/>
</dbReference>
<dbReference type="Gene3D" id="3.30.230.10">
    <property type="match status" value="1"/>
</dbReference>
<dbReference type="Gene3D" id="3.30.70.890">
    <property type="entry name" value="GHMP kinase, C-terminal domain"/>
    <property type="match status" value="1"/>
</dbReference>
<dbReference type="HAMAP" id="MF_00061">
    <property type="entry name" value="IspE"/>
    <property type="match status" value="1"/>
</dbReference>
<dbReference type="InterPro" id="IPR013750">
    <property type="entry name" value="GHMP_kinase_C_dom"/>
</dbReference>
<dbReference type="InterPro" id="IPR036554">
    <property type="entry name" value="GHMP_kinase_C_sf"/>
</dbReference>
<dbReference type="InterPro" id="IPR006204">
    <property type="entry name" value="GHMP_kinase_N_dom"/>
</dbReference>
<dbReference type="InterPro" id="IPR004424">
    <property type="entry name" value="IspE"/>
</dbReference>
<dbReference type="InterPro" id="IPR020568">
    <property type="entry name" value="Ribosomal_Su5_D2-typ_SF"/>
</dbReference>
<dbReference type="InterPro" id="IPR014721">
    <property type="entry name" value="Ribsml_uS5_D2-typ_fold_subgr"/>
</dbReference>
<dbReference type="NCBIfam" id="TIGR00154">
    <property type="entry name" value="ispE"/>
    <property type="match status" value="1"/>
</dbReference>
<dbReference type="PANTHER" id="PTHR43527">
    <property type="entry name" value="4-DIPHOSPHOCYTIDYL-2-C-METHYL-D-ERYTHRITOL KINASE, CHLOROPLASTIC"/>
    <property type="match status" value="1"/>
</dbReference>
<dbReference type="PANTHER" id="PTHR43527:SF2">
    <property type="entry name" value="4-DIPHOSPHOCYTIDYL-2-C-METHYL-D-ERYTHRITOL KINASE, CHLOROPLASTIC"/>
    <property type="match status" value="1"/>
</dbReference>
<dbReference type="Pfam" id="PF08544">
    <property type="entry name" value="GHMP_kinases_C"/>
    <property type="match status" value="1"/>
</dbReference>
<dbReference type="Pfam" id="PF00288">
    <property type="entry name" value="GHMP_kinases_N"/>
    <property type="match status" value="1"/>
</dbReference>
<dbReference type="PIRSF" id="PIRSF010376">
    <property type="entry name" value="IspE"/>
    <property type="match status" value="1"/>
</dbReference>
<dbReference type="SUPFAM" id="SSF55060">
    <property type="entry name" value="GHMP Kinase, C-terminal domain"/>
    <property type="match status" value="1"/>
</dbReference>
<dbReference type="SUPFAM" id="SSF54211">
    <property type="entry name" value="Ribosomal protein S5 domain 2-like"/>
    <property type="match status" value="1"/>
</dbReference>
<accession>Q3ZZE5</accession>
<sequence length="284" mass="31145">MLTLLAPAKVNLSLEVLYRRKDGYHELRSIIQSLSLCDRLSFSPSKTVHISSDSQDWQADLSLVSKAVELFSERCGQNTGVNLKIAKRIPLVSGLGGDSSCAAAVLKGLNKLWGCGYPCWRLMEIGAELGSDVPFFIMGGTAMMEGRGETVTPLPTLTQMWAVLLVPALDMPADKTAALYRNLRPDSFTSGEISDKLLESICQGKLSLSLCFNAFEKVAFELFPELVKYRWQFLEAGAYQISLAGAGPTLFTLLKDKNTAEKIYHNLCQKGHQAYLVSTLGPLD</sequence>
<feature type="chain" id="PRO_0000235086" description="4-diphosphocytidyl-2-C-methyl-D-erythritol kinase">
    <location>
        <begin position="1"/>
        <end position="284"/>
    </location>
</feature>
<feature type="active site" evidence="1">
    <location>
        <position position="9"/>
    </location>
</feature>
<feature type="active site" evidence="1">
    <location>
        <position position="132"/>
    </location>
</feature>
<feature type="binding site" evidence="1">
    <location>
        <begin position="90"/>
        <end position="100"/>
    </location>
    <ligand>
        <name>ATP</name>
        <dbReference type="ChEBI" id="CHEBI:30616"/>
    </ligand>
</feature>
<organism>
    <name type="scientific">Dehalococcoides mccartyi (strain CBDB1)</name>
    <dbReference type="NCBI Taxonomy" id="255470"/>
    <lineage>
        <taxon>Bacteria</taxon>
        <taxon>Bacillati</taxon>
        <taxon>Chloroflexota</taxon>
        <taxon>Dehalococcoidia</taxon>
        <taxon>Dehalococcoidales</taxon>
        <taxon>Dehalococcoidaceae</taxon>
        <taxon>Dehalococcoides</taxon>
    </lineage>
</organism>
<gene>
    <name evidence="1" type="primary">ispE</name>
    <name type="ordered locus">cbdbA356</name>
</gene>
<proteinExistence type="inferred from homology"/>
<evidence type="ECO:0000255" key="1">
    <source>
        <dbReference type="HAMAP-Rule" id="MF_00061"/>
    </source>
</evidence>
<comment type="function">
    <text evidence="1">Catalyzes the phosphorylation of the position 2 hydroxy group of 4-diphosphocytidyl-2C-methyl-D-erythritol.</text>
</comment>
<comment type="catalytic activity">
    <reaction evidence="1">
        <text>4-CDP-2-C-methyl-D-erythritol + ATP = 4-CDP-2-C-methyl-D-erythritol 2-phosphate + ADP + H(+)</text>
        <dbReference type="Rhea" id="RHEA:18437"/>
        <dbReference type="ChEBI" id="CHEBI:15378"/>
        <dbReference type="ChEBI" id="CHEBI:30616"/>
        <dbReference type="ChEBI" id="CHEBI:57823"/>
        <dbReference type="ChEBI" id="CHEBI:57919"/>
        <dbReference type="ChEBI" id="CHEBI:456216"/>
        <dbReference type="EC" id="2.7.1.148"/>
    </reaction>
</comment>
<comment type="pathway">
    <text evidence="1">Isoprenoid biosynthesis; isopentenyl diphosphate biosynthesis via DXP pathway; isopentenyl diphosphate from 1-deoxy-D-xylulose 5-phosphate: step 3/6.</text>
</comment>
<comment type="similarity">
    <text evidence="1">Belongs to the GHMP kinase family. IspE subfamily.</text>
</comment>
<protein>
    <recommendedName>
        <fullName evidence="1">4-diphosphocytidyl-2-C-methyl-D-erythritol kinase</fullName>
        <shortName evidence="1">CMK</shortName>
        <ecNumber evidence="1">2.7.1.148</ecNumber>
    </recommendedName>
    <alternativeName>
        <fullName evidence="1">4-(cytidine-5'-diphospho)-2-C-methyl-D-erythritol kinase</fullName>
    </alternativeName>
</protein>
<keyword id="KW-0067">ATP-binding</keyword>
<keyword id="KW-0414">Isoprene biosynthesis</keyword>
<keyword id="KW-0418">Kinase</keyword>
<keyword id="KW-0547">Nucleotide-binding</keyword>
<keyword id="KW-0808">Transferase</keyword>
<reference key="1">
    <citation type="journal article" date="2005" name="Nat. Biotechnol.">
        <title>Genome sequence of the chlorinated compound-respiring bacterium Dehalococcoides species strain CBDB1.</title>
        <authorList>
            <person name="Kube M."/>
            <person name="Beck A."/>
            <person name="Zinder S.H."/>
            <person name="Kuhl H."/>
            <person name="Reinhardt R."/>
            <person name="Adrian L."/>
        </authorList>
    </citation>
    <scope>NUCLEOTIDE SEQUENCE [LARGE SCALE GENOMIC DNA]</scope>
    <source>
        <strain>CBDB1</strain>
    </source>
</reference>
<name>ISPE_DEHMC</name>